<accession>Q7N3G5</accession>
<protein>
    <recommendedName>
        <fullName evidence="2">DnaA regulatory inactivator Hda</fullName>
    </recommendedName>
</protein>
<dbReference type="EMBL" id="BX571868">
    <property type="protein sequence ID" value="CAE15126.1"/>
    <property type="molecule type" value="Genomic_DNA"/>
</dbReference>
<dbReference type="SMR" id="Q7N3G5"/>
<dbReference type="STRING" id="243265.plu2752"/>
<dbReference type="KEGG" id="plu:plu2752"/>
<dbReference type="eggNOG" id="COG0593">
    <property type="taxonomic scope" value="Bacteria"/>
</dbReference>
<dbReference type="HOGENOM" id="CLU_072265_1_1_6"/>
<dbReference type="Proteomes" id="UP000002514">
    <property type="component" value="Chromosome"/>
</dbReference>
<dbReference type="GO" id="GO:0006270">
    <property type="term" value="P:DNA replication initiation"/>
    <property type="evidence" value="ECO:0007669"/>
    <property type="project" value="TreeGrafter"/>
</dbReference>
<dbReference type="GO" id="GO:0032297">
    <property type="term" value="P:negative regulation of DNA-templated DNA replication initiation"/>
    <property type="evidence" value="ECO:0007669"/>
    <property type="project" value="InterPro"/>
</dbReference>
<dbReference type="FunFam" id="1.10.8.60:FF:000024">
    <property type="entry name" value="DnaA regulatory inactivator Hda"/>
    <property type="match status" value="1"/>
</dbReference>
<dbReference type="FunFam" id="3.40.50.300:FF:000452">
    <property type="entry name" value="DnaA regulatory inactivator Hda"/>
    <property type="match status" value="1"/>
</dbReference>
<dbReference type="Gene3D" id="1.10.8.60">
    <property type="match status" value="1"/>
</dbReference>
<dbReference type="Gene3D" id="3.40.50.300">
    <property type="entry name" value="P-loop containing nucleotide triphosphate hydrolases"/>
    <property type="match status" value="1"/>
</dbReference>
<dbReference type="HAMAP" id="MF_01158">
    <property type="entry name" value="Hda"/>
    <property type="match status" value="1"/>
</dbReference>
<dbReference type="InterPro" id="IPR013317">
    <property type="entry name" value="DnaA_dom"/>
</dbReference>
<dbReference type="InterPro" id="IPR017788">
    <property type="entry name" value="Hda"/>
</dbReference>
<dbReference type="InterPro" id="IPR022864">
    <property type="entry name" value="Hda_Enterobact"/>
</dbReference>
<dbReference type="InterPro" id="IPR055199">
    <property type="entry name" value="Hda_lid"/>
</dbReference>
<dbReference type="InterPro" id="IPR027417">
    <property type="entry name" value="P-loop_NTPase"/>
</dbReference>
<dbReference type="NCBIfam" id="TIGR03420">
    <property type="entry name" value="DnaA_homol_Hda"/>
    <property type="match status" value="1"/>
</dbReference>
<dbReference type="NCBIfam" id="NF005982">
    <property type="entry name" value="PRK08084.1"/>
    <property type="match status" value="1"/>
</dbReference>
<dbReference type="PANTHER" id="PTHR30050">
    <property type="entry name" value="CHROMOSOMAL REPLICATION INITIATOR PROTEIN DNAA"/>
    <property type="match status" value="1"/>
</dbReference>
<dbReference type="PANTHER" id="PTHR30050:SF5">
    <property type="entry name" value="DNAA REGULATORY INACTIVATOR HDA"/>
    <property type="match status" value="1"/>
</dbReference>
<dbReference type="Pfam" id="PF00308">
    <property type="entry name" value="Bac_DnaA"/>
    <property type="match status" value="1"/>
</dbReference>
<dbReference type="Pfam" id="PF22688">
    <property type="entry name" value="Hda_lid"/>
    <property type="match status" value="1"/>
</dbReference>
<dbReference type="SUPFAM" id="SSF52540">
    <property type="entry name" value="P-loop containing nucleoside triphosphate hydrolases"/>
    <property type="match status" value="1"/>
</dbReference>
<keyword id="KW-0235">DNA replication</keyword>
<keyword id="KW-0236">DNA replication inhibitor</keyword>
<keyword id="KW-1185">Reference proteome</keyword>
<evidence type="ECO:0000250" key="1"/>
<evidence type="ECO:0000255" key="2">
    <source>
        <dbReference type="HAMAP-Rule" id="MF_01158"/>
    </source>
</evidence>
<feature type="chain" id="PRO_0000114318" description="DnaA regulatory inactivator Hda">
    <location>
        <begin position="1"/>
        <end position="233"/>
    </location>
</feature>
<comment type="function">
    <text evidence="1">Mediates the interaction of DNA replication initiator protein DnaA with DNA polymerase subunit beta sliding clamp (dnaN). Stimulates hydrolysis of ATP-DnaA to ADP-DnaA, rendering DnaA inactive for reinitiation, a process called regulatory inhibition of DnaA or RIDA (By similarity).</text>
</comment>
<comment type="subunit">
    <text evidence="2">The active form seems to be an ADP-bound monomer. Forms the RIDA complex (regulatory inactivation of DnaA) of ATP-DnaA, ADP-Hda and the DNA-loaded beta sliding clamp (dnaN).</text>
</comment>
<comment type="similarity">
    <text evidence="2">Belongs to the DnaA family. HdA subfamily.</text>
</comment>
<sequence>MNTPSQLSLPLYLPDDETFASFFPGENATLLAAIKLAINQPHGSYIYFWSRDSGGRSHLLHAACAELSLKDEAVGYVPLDKRAYFIPEVLDGMEHLSLVCIDNIESIAGDEEWEMAIFNLYNRILEIGRTCLLISGDRPPRQINLKLPDLASRLDWGQIYKLQPLSDDEKLQALQLRAKLRGFELPEDVGRFLLKRLDREMRTLFMALNQLDHASIVAQRKLTIPFVKDILHL</sequence>
<name>HDA_PHOLL</name>
<gene>
    <name evidence="2" type="primary">hda</name>
    <name type="ordered locus">plu2752</name>
</gene>
<proteinExistence type="inferred from homology"/>
<reference key="1">
    <citation type="journal article" date="2003" name="Nat. Biotechnol.">
        <title>The genome sequence of the entomopathogenic bacterium Photorhabdus luminescens.</title>
        <authorList>
            <person name="Duchaud E."/>
            <person name="Rusniok C."/>
            <person name="Frangeul L."/>
            <person name="Buchrieser C."/>
            <person name="Givaudan A."/>
            <person name="Taourit S."/>
            <person name="Bocs S."/>
            <person name="Boursaux-Eude C."/>
            <person name="Chandler M."/>
            <person name="Charles J.-F."/>
            <person name="Dassa E."/>
            <person name="Derose R."/>
            <person name="Derzelle S."/>
            <person name="Freyssinet G."/>
            <person name="Gaudriault S."/>
            <person name="Medigue C."/>
            <person name="Lanois A."/>
            <person name="Powell K."/>
            <person name="Siguier P."/>
            <person name="Vincent R."/>
            <person name="Wingate V."/>
            <person name="Zouine M."/>
            <person name="Glaser P."/>
            <person name="Boemare N."/>
            <person name="Danchin A."/>
            <person name="Kunst F."/>
        </authorList>
    </citation>
    <scope>NUCLEOTIDE SEQUENCE [LARGE SCALE GENOMIC DNA]</scope>
    <source>
        <strain>DSM 15139 / CIP 105565 / TT01</strain>
    </source>
</reference>
<organism>
    <name type="scientific">Photorhabdus laumondii subsp. laumondii (strain DSM 15139 / CIP 105565 / TT01)</name>
    <name type="common">Photorhabdus luminescens subsp. laumondii</name>
    <dbReference type="NCBI Taxonomy" id="243265"/>
    <lineage>
        <taxon>Bacteria</taxon>
        <taxon>Pseudomonadati</taxon>
        <taxon>Pseudomonadota</taxon>
        <taxon>Gammaproteobacteria</taxon>
        <taxon>Enterobacterales</taxon>
        <taxon>Morganellaceae</taxon>
        <taxon>Photorhabdus</taxon>
    </lineage>
</organism>